<accession>Q5UQC2</accession>
<protein>
    <recommendedName>
        <fullName>Uncharacterized protein L231</fullName>
    </recommendedName>
</protein>
<feature type="chain" id="PRO_0000071248" description="Uncharacterized protein L231">
    <location>
        <begin position="1"/>
        <end position="191"/>
    </location>
</feature>
<keyword id="KW-1185">Reference proteome</keyword>
<dbReference type="EMBL" id="AY653733">
    <property type="protein sequence ID" value="AAV50504.1"/>
    <property type="molecule type" value="Genomic_DNA"/>
</dbReference>
<dbReference type="KEGG" id="vg:9924838"/>
<dbReference type="OrthoDB" id="25887at10239"/>
<dbReference type="Proteomes" id="UP000001134">
    <property type="component" value="Genome"/>
</dbReference>
<gene>
    <name type="ordered locus">MIMI_L231</name>
</gene>
<organismHost>
    <name type="scientific">Acanthamoeba polyphaga</name>
    <name type="common">Amoeba</name>
    <dbReference type="NCBI Taxonomy" id="5757"/>
</organismHost>
<proteinExistence type="predicted"/>
<reference key="1">
    <citation type="journal article" date="2004" name="Science">
        <title>The 1.2-megabase genome sequence of Mimivirus.</title>
        <authorList>
            <person name="Raoult D."/>
            <person name="Audic S."/>
            <person name="Robert C."/>
            <person name="Abergel C."/>
            <person name="Renesto P."/>
            <person name="Ogata H."/>
            <person name="La Scola B."/>
            <person name="Susan M."/>
            <person name="Claverie J.-M."/>
        </authorList>
    </citation>
    <scope>NUCLEOTIDE SEQUENCE [LARGE SCALE GENOMIC DNA]</scope>
    <source>
        <strain>Rowbotham-Bradford</strain>
    </source>
</reference>
<organism>
    <name type="scientific">Acanthamoeba polyphaga mimivirus</name>
    <name type="common">APMV</name>
    <dbReference type="NCBI Taxonomy" id="212035"/>
    <lineage>
        <taxon>Viruses</taxon>
        <taxon>Varidnaviria</taxon>
        <taxon>Bamfordvirae</taxon>
        <taxon>Nucleocytoviricota</taxon>
        <taxon>Megaviricetes</taxon>
        <taxon>Imitervirales</taxon>
        <taxon>Mimiviridae</taxon>
        <taxon>Megamimivirinae</taxon>
        <taxon>Mimivirus</taxon>
        <taxon>Mimivirus bradfordmassiliense</taxon>
    </lineage>
</organism>
<name>YL231_MIMIV</name>
<sequence>MDEHIINLPFSNSLNSIDIVPLYLLTDKKIIDIAFEEIIGLIFHANFNLACDRTYKKHAYWDFLYKKFVKDIEKQNLAGWPIMTVNKNDYFNRIDIISIEKPFIDTDNILTLLHRLLYIENYKINAGYDNPVLKFKFIKLSCLEHSNIVENVSLYDLFSLLEKYLTYYVSKYGNVGNIENSLGSRILGLMR</sequence>